<dbReference type="EC" id="1.2.1.38" evidence="1"/>
<dbReference type="EMBL" id="CP000350">
    <property type="protein sequence ID" value="ABJ75925.1"/>
    <property type="molecule type" value="Genomic_DNA"/>
</dbReference>
<dbReference type="RefSeq" id="WP_011670203.1">
    <property type="nucleotide sequence ID" value="NC_008510.1"/>
</dbReference>
<dbReference type="SMR" id="Q04T45"/>
<dbReference type="KEGG" id="lbj:LBJ_1343"/>
<dbReference type="HOGENOM" id="CLU_006384_0_1_12"/>
<dbReference type="UniPathway" id="UPA00068">
    <property type="reaction ID" value="UER00108"/>
</dbReference>
<dbReference type="Proteomes" id="UP000000656">
    <property type="component" value="Chromosome 1"/>
</dbReference>
<dbReference type="GO" id="GO:0005737">
    <property type="term" value="C:cytoplasm"/>
    <property type="evidence" value="ECO:0007669"/>
    <property type="project" value="UniProtKB-SubCell"/>
</dbReference>
<dbReference type="GO" id="GO:0003942">
    <property type="term" value="F:N-acetyl-gamma-glutamyl-phosphate reductase activity"/>
    <property type="evidence" value="ECO:0007669"/>
    <property type="project" value="UniProtKB-UniRule"/>
</dbReference>
<dbReference type="GO" id="GO:0051287">
    <property type="term" value="F:NAD binding"/>
    <property type="evidence" value="ECO:0007669"/>
    <property type="project" value="InterPro"/>
</dbReference>
<dbReference type="GO" id="GO:0070401">
    <property type="term" value="F:NADP+ binding"/>
    <property type="evidence" value="ECO:0007669"/>
    <property type="project" value="InterPro"/>
</dbReference>
<dbReference type="GO" id="GO:0006526">
    <property type="term" value="P:L-arginine biosynthetic process"/>
    <property type="evidence" value="ECO:0007669"/>
    <property type="project" value="UniProtKB-UniRule"/>
</dbReference>
<dbReference type="CDD" id="cd23934">
    <property type="entry name" value="AGPR_1_C"/>
    <property type="match status" value="1"/>
</dbReference>
<dbReference type="CDD" id="cd17895">
    <property type="entry name" value="AGPR_1_N"/>
    <property type="match status" value="1"/>
</dbReference>
<dbReference type="Gene3D" id="3.30.360.10">
    <property type="entry name" value="Dihydrodipicolinate Reductase, domain 2"/>
    <property type="match status" value="1"/>
</dbReference>
<dbReference type="Gene3D" id="3.40.50.720">
    <property type="entry name" value="NAD(P)-binding Rossmann-like Domain"/>
    <property type="match status" value="1"/>
</dbReference>
<dbReference type="HAMAP" id="MF_00150">
    <property type="entry name" value="ArgC_type1"/>
    <property type="match status" value="1"/>
</dbReference>
<dbReference type="InterPro" id="IPR023013">
    <property type="entry name" value="AGPR_AS"/>
</dbReference>
<dbReference type="InterPro" id="IPR000706">
    <property type="entry name" value="AGPR_type-1"/>
</dbReference>
<dbReference type="InterPro" id="IPR036291">
    <property type="entry name" value="NAD(P)-bd_dom_sf"/>
</dbReference>
<dbReference type="InterPro" id="IPR050085">
    <property type="entry name" value="NAGSA_dehydrogenase"/>
</dbReference>
<dbReference type="InterPro" id="IPR000534">
    <property type="entry name" value="Semialdehyde_DH_NAD-bd"/>
</dbReference>
<dbReference type="NCBIfam" id="TIGR01850">
    <property type="entry name" value="argC"/>
    <property type="match status" value="1"/>
</dbReference>
<dbReference type="PANTHER" id="PTHR32338:SF10">
    <property type="entry name" value="N-ACETYL-GAMMA-GLUTAMYL-PHOSPHATE REDUCTASE, CHLOROPLASTIC-RELATED"/>
    <property type="match status" value="1"/>
</dbReference>
<dbReference type="PANTHER" id="PTHR32338">
    <property type="entry name" value="N-ACETYL-GAMMA-GLUTAMYL-PHOSPHATE REDUCTASE, CHLOROPLASTIC-RELATED-RELATED"/>
    <property type="match status" value="1"/>
</dbReference>
<dbReference type="Pfam" id="PF01118">
    <property type="entry name" value="Semialdhyde_dh"/>
    <property type="match status" value="1"/>
</dbReference>
<dbReference type="Pfam" id="PF22698">
    <property type="entry name" value="Semialdhyde_dhC_1"/>
    <property type="match status" value="1"/>
</dbReference>
<dbReference type="SMART" id="SM00859">
    <property type="entry name" value="Semialdhyde_dh"/>
    <property type="match status" value="1"/>
</dbReference>
<dbReference type="SUPFAM" id="SSF55347">
    <property type="entry name" value="Glyceraldehyde-3-phosphate dehydrogenase-like, C-terminal domain"/>
    <property type="match status" value="1"/>
</dbReference>
<dbReference type="SUPFAM" id="SSF51735">
    <property type="entry name" value="NAD(P)-binding Rossmann-fold domains"/>
    <property type="match status" value="1"/>
</dbReference>
<dbReference type="PROSITE" id="PS01224">
    <property type="entry name" value="ARGC"/>
    <property type="match status" value="1"/>
</dbReference>
<proteinExistence type="inferred from homology"/>
<sequence>MAEISILGAGGLTGKELLLLLSRQKEHEVVHITSDKLAGKTLAEVFPEIPFPKNLTFHSHEAAIPSQSLVVLAVPNNVSIESAPKFLDSGHKVIDLSGAYRLHNQEIFEKAYQLKHTQFSYVDKAVFGIPEIFRDKLKNADFVSNPGCFSTSVILPVFLLNELRKNLRPRIIADSKSGVSGAGGRTEDAGYSYTGVYENFRAYKILSHQHEPEIKEYIYANSGLLEPEVIFTPHLLPVYRGILSTIVLELDTESFSDPISILQNSCKNEPFLRILKTPEEIELKRVQHTNFLDISVRKRGNTLVIVSALDNLIKGAAGQALQNINLMTGTKEVLGLFP</sequence>
<evidence type="ECO:0000255" key="1">
    <source>
        <dbReference type="HAMAP-Rule" id="MF_00150"/>
    </source>
</evidence>
<protein>
    <recommendedName>
        <fullName evidence="1">N-acetyl-gamma-glutamyl-phosphate reductase</fullName>
        <shortName evidence="1">AGPR</shortName>
        <ecNumber evidence="1">1.2.1.38</ecNumber>
    </recommendedName>
    <alternativeName>
        <fullName evidence="1">N-acetyl-glutamate semialdehyde dehydrogenase</fullName>
        <shortName evidence="1">NAGSA dehydrogenase</shortName>
    </alternativeName>
</protein>
<comment type="function">
    <text evidence="1">Catalyzes the NADPH-dependent reduction of N-acetyl-5-glutamyl phosphate to yield N-acetyl-L-glutamate 5-semialdehyde.</text>
</comment>
<comment type="catalytic activity">
    <reaction evidence="1">
        <text>N-acetyl-L-glutamate 5-semialdehyde + phosphate + NADP(+) = N-acetyl-L-glutamyl 5-phosphate + NADPH + H(+)</text>
        <dbReference type="Rhea" id="RHEA:21588"/>
        <dbReference type="ChEBI" id="CHEBI:15378"/>
        <dbReference type="ChEBI" id="CHEBI:29123"/>
        <dbReference type="ChEBI" id="CHEBI:43474"/>
        <dbReference type="ChEBI" id="CHEBI:57783"/>
        <dbReference type="ChEBI" id="CHEBI:57936"/>
        <dbReference type="ChEBI" id="CHEBI:58349"/>
        <dbReference type="EC" id="1.2.1.38"/>
    </reaction>
</comment>
<comment type="pathway">
    <text evidence="1">Amino-acid biosynthesis; L-arginine biosynthesis; N(2)-acetyl-L-ornithine from L-glutamate: step 3/4.</text>
</comment>
<comment type="subcellular location">
    <subcellularLocation>
        <location evidence="1">Cytoplasm</location>
    </subcellularLocation>
</comment>
<comment type="similarity">
    <text evidence="1">Belongs to the NAGSA dehydrogenase family. Type 1 subfamily.</text>
</comment>
<gene>
    <name evidence="1" type="primary">argC</name>
    <name type="ordered locus">LBJ_1343</name>
</gene>
<reference key="1">
    <citation type="journal article" date="2006" name="Proc. Natl. Acad. Sci. U.S.A.">
        <title>Genome reduction in Leptospira borgpetersenii reflects limited transmission potential.</title>
        <authorList>
            <person name="Bulach D.M."/>
            <person name="Zuerner R.L."/>
            <person name="Wilson P."/>
            <person name="Seemann T."/>
            <person name="McGrath A."/>
            <person name="Cullen P.A."/>
            <person name="Davis J."/>
            <person name="Johnson M."/>
            <person name="Kuczek E."/>
            <person name="Alt D.P."/>
            <person name="Peterson-Burch B."/>
            <person name="Coppel R.L."/>
            <person name="Rood J.I."/>
            <person name="Davies J.K."/>
            <person name="Adler B."/>
        </authorList>
    </citation>
    <scope>NUCLEOTIDE SEQUENCE [LARGE SCALE GENOMIC DNA]</scope>
    <source>
        <strain>JB197</strain>
    </source>
</reference>
<feature type="chain" id="PRO_1000011003" description="N-acetyl-gamma-glutamyl-phosphate reductase">
    <location>
        <begin position="1"/>
        <end position="338"/>
    </location>
</feature>
<feature type="active site" evidence="1">
    <location>
        <position position="148"/>
    </location>
</feature>
<keyword id="KW-0028">Amino-acid biosynthesis</keyword>
<keyword id="KW-0055">Arginine biosynthesis</keyword>
<keyword id="KW-0963">Cytoplasm</keyword>
<keyword id="KW-0521">NADP</keyword>
<keyword id="KW-0560">Oxidoreductase</keyword>
<accession>Q04T45</accession>
<organism>
    <name type="scientific">Leptospira borgpetersenii serovar Hardjo-bovis (strain JB197)</name>
    <dbReference type="NCBI Taxonomy" id="355277"/>
    <lineage>
        <taxon>Bacteria</taxon>
        <taxon>Pseudomonadati</taxon>
        <taxon>Spirochaetota</taxon>
        <taxon>Spirochaetia</taxon>
        <taxon>Leptospirales</taxon>
        <taxon>Leptospiraceae</taxon>
        <taxon>Leptospira</taxon>
    </lineage>
</organism>
<name>ARGC_LEPBJ</name>